<proteinExistence type="evidence at protein level"/>
<evidence type="ECO:0000250" key="1">
    <source>
        <dbReference type="UniProtKB" id="C0HJX1"/>
    </source>
</evidence>
<evidence type="ECO:0000255" key="2">
    <source>
        <dbReference type="PROSITE-ProRule" id="PRU00498"/>
    </source>
</evidence>
<evidence type="ECO:0000269" key="3">
    <source>
    </source>
</evidence>
<evidence type="ECO:0000303" key="4">
    <source>
    </source>
</evidence>
<evidence type="ECO:0000305" key="5"/>
<evidence type="ECO:0000305" key="6">
    <source>
    </source>
</evidence>
<sequence>SDSLSFSFINFDKDERNVIAQGDARLVGNNILQLTRTDSNGSPVKSTVGRILYVAQVRLWEKSTNRVANFQSQFSFFLESPLSNPADGIAFFIAPPDTAIPSGSAGGLLGLFSPKTAQNESANQVLAVEFDTFYAQNSNTWDPNYPHIGIDVNSIKSAKTVRWERREGVTLNVLVTYNPSTRTIDVVATYPDGQRYDLSVVVDVTTVLPEWVRVGFSAASGEQFQTHNLESWSFTSTLLYTAQKENN</sequence>
<organism evidence="4">
    <name type="scientific">Centrolobium microchaete</name>
    <name type="common">Canarywood tree</name>
    <name type="synonym">Centrolobium robustum var. microchaete</name>
    <dbReference type="NCBI Taxonomy" id="500177"/>
    <lineage>
        <taxon>Eukaryota</taxon>
        <taxon>Viridiplantae</taxon>
        <taxon>Streptophyta</taxon>
        <taxon>Embryophyta</taxon>
        <taxon>Tracheophyta</taxon>
        <taxon>Spermatophyta</taxon>
        <taxon>Magnoliopsida</taxon>
        <taxon>eudicotyledons</taxon>
        <taxon>Gunneridae</taxon>
        <taxon>Pentapetalae</taxon>
        <taxon>rosids</taxon>
        <taxon>fabids</taxon>
        <taxon>Fabales</taxon>
        <taxon>Fabaceae</taxon>
        <taxon>Papilionoideae</taxon>
        <taxon>50 kb inversion clade</taxon>
        <taxon>dalbergioids sensu lato</taxon>
        <taxon>Dalbergieae</taxon>
        <taxon>Pterocarpus clade</taxon>
        <taxon>Centrolobium</taxon>
    </lineage>
</organism>
<keyword id="KW-0002">3D-structure</keyword>
<keyword id="KW-0106">Calcium</keyword>
<keyword id="KW-0903">Direct protein sequencing</keyword>
<keyword id="KW-0325">Glycoprotein</keyword>
<keyword id="KW-0430">Lectin</keyword>
<keyword id="KW-0464">Manganese</keyword>
<keyword id="KW-0465">Mannose-binding</keyword>
<keyword id="KW-0479">Metal-binding</keyword>
<comment type="function">
    <text evidence="3">Mannose-specific lectin. Also binds alpha-methyl-D-mannoside, D-glucose, N-acetyl-D-glucosamine and sucrose but not D-galactose, D-arabinose, D-fructose, D-xylose, lactose or glycoproteins fetiun, PSM and ovalbumin. Shows agglutinating activity towards rabbit erythrocytes.</text>
</comment>
<comment type="biophysicochemical properties">
    <phDependence>
        <text evidence="3">Optimum pH is 7-8 for hemagglutinating activity. Activity drops rapidly at lower or higher pH.</text>
    </phDependence>
    <temperatureDependence>
        <text evidence="3">Thermostable. Retains hemagglutinating activity after incubation at 50 degrees Celsius for 1 hour. At higher temperatures activity drops drastically and is lost at 80 degrees Celsius.</text>
    </temperatureDependence>
</comment>
<comment type="subunit">
    <text evidence="3">Homodimer; non-covalently linked.</text>
</comment>
<comment type="PTM">
    <text evidence="3">Glycosylated.</text>
</comment>
<comment type="mass spectrometry">
    <molecule>Mannose-specific lectin CML-1</molecule>
    <text>CML-1.</text>
</comment>
<comment type="mass spectrometry">
    <molecule>Mannose-specific lectin CML-2</molecule>
    <text>CML-2.</text>
</comment>
<comment type="similarity">
    <text evidence="5">Belongs to the leguminous lectin family.</text>
</comment>
<protein>
    <recommendedName>
        <fullName evidence="4">Mannose-specific lectin CML-2</fullName>
    </recommendedName>
    <component>
        <recommendedName>
            <fullName evidence="4">Mannose-specific lectin CML-1</fullName>
        </recommendedName>
    </component>
</protein>
<name>LECC1_CENMI</name>
<accession>C0HK20</accession>
<dbReference type="PDB" id="9C4I">
    <property type="method" value="X-ray"/>
    <property type="resolution" value="1.30 A"/>
    <property type="chains" value="A/B=1-241"/>
</dbReference>
<dbReference type="PDBsum" id="9C4I"/>
<dbReference type="SMR" id="C0HK20"/>
<dbReference type="GO" id="GO:0005537">
    <property type="term" value="F:D-mannose binding"/>
    <property type="evidence" value="ECO:0007669"/>
    <property type="project" value="UniProtKB-KW"/>
</dbReference>
<dbReference type="GO" id="GO:0046872">
    <property type="term" value="F:metal ion binding"/>
    <property type="evidence" value="ECO:0007669"/>
    <property type="project" value="UniProtKB-KW"/>
</dbReference>
<dbReference type="CDD" id="cd06899">
    <property type="entry name" value="lectin_legume_LecRK_Arcelin_ConA"/>
    <property type="match status" value="1"/>
</dbReference>
<dbReference type="FunFam" id="2.60.120.200:FF:000237">
    <property type="entry name" value="Mannose/glucose-specific lectin"/>
    <property type="match status" value="1"/>
</dbReference>
<dbReference type="Gene3D" id="2.60.120.200">
    <property type="match status" value="1"/>
</dbReference>
<dbReference type="InterPro" id="IPR013320">
    <property type="entry name" value="ConA-like_dom_sf"/>
</dbReference>
<dbReference type="InterPro" id="IPR016363">
    <property type="entry name" value="L-lectin"/>
</dbReference>
<dbReference type="InterPro" id="IPR000985">
    <property type="entry name" value="Lectin_LegA_CS"/>
</dbReference>
<dbReference type="InterPro" id="IPR019825">
    <property type="entry name" value="Lectin_legB_Mn/Ca_BS"/>
</dbReference>
<dbReference type="InterPro" id="IPR001220">
    <property type="entry name" value="Legume_lectin_dom"/>
</dbReference>
<dbReference type="InterPro" id="IPR050258">
    <property type="entry name" value="Leguminous_Lectin"/>
</dbReference>
<dbReference type="PANTHER" id="PTHR32401">
    <property type="entry name" value="CONCANAVALIN A-LIKE LECTIN FAMILY PROTEIN"/>
    <property type="match status" value="1"/>
</dbReference>
<dbReference type="PANTHER" id="PTHR32401:SF47">
    <property type="entry name" value="LEGUME LECTIN DOMAIN-CONTAINING PROTEIN"/>
    <property type="match status" value="1"/>
</dbReference>
<dbReference type="Pfam" id="PF00139">
    <property type="entry name" value="Lectin_legB"/>
    <property type="match status" value="1"/>
</dbReference>
<dbReference type="PIRSF" id="PIRSF002690">
    <property type="entry name" value="L-type_lectin_plant"/>
    <property type="match status" value="1"/>
</dbReference>
<dbReference type="SUPFAM" id="SSF49899">
    <property type="entry name" value="Concanavalin A-like lectins/glucanases"/>
    <property type="match status" value="1"/>
</dbReference>
<dbReference type="PROSITE" id="PS00308">
    <property type="entry name" value="LECTIN_LEGUME_ALPHA"/>
    <property type="match status" value="1"/>
</dbReference>
<dbReference type="PROSITE" id="PS00307">
    <property type="entry name" value="LECTIN_LEGUME_BETA"/>
    <property type="match status" value="1"/>
</dbReference>
<reference evidence="5" key="1">
    <citation type="journal article" date="2015" name="Int. J. Biol. Macromol.">
        <title>Purification and primary structure of a novel mannose-specific lectin from Centrolobium microchaete Mart seeds.</title>
        <authorList>
            <person name="Vasconcelos M.A."/>
            <person name="Alves A.C."/>
            <person name="Carneiro R.F."/>
            <person name="Dias A.H."/>
            <person name="Martins F.W."/>
            <person name="Cajazeiras J.B."/>
            <person name="Nagano C.S."/>
            <person name="Teixeira E.H."/>
            <person name="Nascimento K.S."/>
            <person name="Cavada B.S."/>
        </authorList>
    </citation>
    <scope>PROTEIN SEQUENCE</scope>
    <scope>FUNCTION</scope>
    <scope>BIOPHYSICOCHEMICAL PROPERTIES</scope>
    <scope>SUBUNIT</scope>
    <scope>GLYCOSYLATION</scope>
    <scope>MASS SPECTROMETRY</scope>
    <scope>IDENTIFICATION BY MASS SPECTROMETRY</scope>
    <source>
        <tissue evidence="4">Seed</tissue>
    </source>
</reference>
<feature type="chain" id="PRO_0000437084" description="Mannose-specific lectin CML-2" evidence="3">
    <location>
        <begin position="1"/>
        <end position="247"/>
    </location>
</feature>
<feature type="chain" id="PRO_0000437085" description="Mannose-specific lectin CML-1" evidence="3">
    <location>
        <begin position="1"/>
        <end position="246"/>
    </location>
</feature>
<feature type="binding site" evidence="1">
    <location>
        <position position="87"/>
    </location>
    <ligand>
        <name>a carbohydrate</name>
        <dbReference type="ChEBI" id="CHEBI:16646"/>
    </ligand>
</feature>
<feature type="binding site" evidence="1">
    <location>
        <position position="107"/>
    </location>
    <ligand>
        <name>a carbohydrate</name>
        <dbReference type="ChEBI" id="CHEBI:16646"/>
    </ligand>
</feature>
<feature type="binding site" evidence="1">
    <location>
        <position position="129"/>
    </location>
    <ligand>
        <name>Mn(2+)</name>
        <dbReference type="ChEBI" id="CHEBI:29035"/>
    </ligand>
</feature>
<feature type="binding site" evidence="1">
    <location>
        <position position="131"/>
    </location>
    <ligand>
        <name>Ca(2+)</name>
        <dbReference type="ChEBI" id="CHEBI:29108"/>
    </ligand>
</feature>
<feature type="binding site" evidence="1">
    <location>
        <position position="131"/>
    </location>
    <ligand>
        <name>Mn(2+)</name>
        <dbReference type="ChEBI" id="CHEBI:29035"/>
    </ligand>
</feature>
<feature type="binding site" evidence="1">
    <location>
        <position position="133"/>
    </location>
    <ligand>
        <name>Ca(2+)</name>
        <dbReference type="ChEBI" id="CHEBI:29108"/>
    </ligand>
</feature>
<feature type="binding site" evidence="1">
    <location>
        <position position="138"/>
    </location>
    <ligand>
        <name>a carbohydrate</name>
        <dbReference type="ChEBI" id="CHEBI:16646"/>
    </ligand>
</feature>
<feature type="binding site" evidence="1">
    <location>
        <position position="139"/>
    </location>
    <ligand>
        <name>a carbohydrate</name>
        <dbReference type="ChEBI" id="CHEBI:16646"/>
    </ligand>
</feature>
<feature type="binding site" evidence="1">
    <location>
        <position position="139"/>
    </location>
    <ligand>
        <name>Ca(2+)</name>
        <dbReference type="ChEBI" id="CHEBI:29108"/>
    </ligand>
</feature>
<feature type="binding site" evidence="1">
    <location>
        <position position="142"/>
    </location>
    <ligand>
        <name>Ca(2+)</name>
        <dbReference type="ChEBI" id="CHEBI:29108"/>
    </ligand>
</feature>
<feature type="binding site" evidence="1">
    <location>
        <position position="142"/>
    </location>
    <ligand>
        <name>Mn(2+)</name>
        <dbReference type="ChEBI" id="CHEBI:29035"/>
    </ligand>
</feature>
<feature type="binding site" evidence="1">
    <location>
        <position position="147"/>
    </location>
    <ligand>
        <name>Mn(2+)</name>
        <dbReference type="ChEBI" id="CHEBI:29035"/>
    </ligand>
</feature>
<feature type="binding site" evidence="1">
    <location>
        <position position="221"/>
    </location>
    <ligand>
        <name>a carbohydrate</name>
        <dbReference type="ChEBI" id="CHEBI:16646"/>
    </ligand>
</feature>
<feature type="binding site" evidence="1">
    <location>
        <position position="222"/>
    </location>
    <ligand>
        <name>a carbohydrate</name>
        <dbReference type="ChEBI" id="CHEBI:16646"/>
    </ligand>
</feature>
<feature type="binding site" evidence="1">
    <location>
        <position position="223"/>
    </location>
    <ligand>
        <name>a carbohydrate</name>
        <dbReference type="ChEBI" id="CHEBI:16646"/>
    </ligand>
</feature>
<feature type="glycosylation site" description="N-linked (GlcNAc...) asparagine" evidence="2">
    <location>
        <position position="119"/>
    </location>
</feature>
<feature type="unsure residue" description="Assigned by comparison with orthologs" evidence="6">
    <location>
        <begin position="75"/>
        <end position="76"/>
    </location>
</feature>